<protein>
    <recommendedName>
        <fullName>Inclusion body clearance protein IML2</fullName>
    </recommendedName>
</protein>
<keyword id="KW-0963">Cytoplasm</keyword>
<keyword id="KW-0539">Nucleus</keyword>
<keyword id="KW-0597">Phosphoprotein</keyword>
<keyword id="KW-1185">Reference proteome</keyword>
<gene>
    <name type="primary">IML2</name>
    <name type="ordered locus">CAALFM_C114210CA</name>
    <name type="ORF">CaO19.7229</name>
</gene>
<sequence>MLKGLRKKASILSLGSMASQQSTSSAINSESNYDKILTQVYDFEIALKAMDYLLDDRTKTGTDLLQNEASKNNNSEQPHAIFPLALGVMEFIEATLGFEPEVMAKAHKTLSEAENASLNNSKYNLKYQLATSMIYPPGTEFQVTFAESTLLNALLMLLTENNGMVESAKALFKLRRAYQTLDAVYKKIKESEPIFNKNLAKLKKEAAMQGNGTKSNSIITTENFSISTVDLPGYSSQTSSTSSLPQDISLMKNLEKIYLMRKSRIEGATLANNVNPERVNLFEDSNSSLTLAKQSNPKYEEQRVDNANNNNNSHDVGEDDSSSSDNEYCDASEEFDIEDTLNLPPPQIHSSAQSVLSSIETSPSSAQNASDNHLHVSTIDEYIHSGVQLCFGILQVVLSLIPPAIGKVLSIVGFRGDREVGLRLLWRTAITCRNVHGELALLFILVFYDGPVQFVDNGFRLPDQGNDKKIISLDNKATVSEAELDIILERPELYTSQLLRRARRMFPHNALWILQEGRMLAAEGDLALATKTMQDFTDDPANEIQMQQAEALLVFDRATIYIYQHEYDNAARDLIYLIDINSWSKAVYLFMAASCYLEKYRMIKMDIISVDNKESEMAKYSSLFDKYLDLALSYVPGHGHNAVGKKGGIGGSNKQMPFDKFLLRKSRHIEARKKKYPNLPTADIVGTSLIHELIYFWNGYNRMSSHDLEIALKLLGYSGAPNSEYSANTNGNLYALIEETEDEAMIRYFLQGITLRQLGSINDGLGLLDNHVISKYVISEPLHQFRFHKMTYSPYIYPTALYEKTMFVWLLRTKNTAKLDVHQAVQESKSWLKRAEIVGEGDYELSNRTGMRIKAAGDRLEQLATL</sequence>
<evidence type="ECO:0000250" key="1">
    <source>
        <dbReference type="UniProtKB" id="P47031"/>
    </source>
</evidence>
<evidence type="ECO:0000256" key="2">
    <source>
        <dbReference type="SAM" id="MobiDB-lite"/>
    </source>
</evidence>
<evidence type="ECO:0000305" key="3"/>
<dbReference type="EMBL" id="CP017623">
    <property type="protein sequence ID" value="AOW27021.1"/>
    <property type="molecule type" value="Genomic_DNA"/>
</dbReference>
<dbReference type="RefSeq" id="XP_715030.1">
    <property type="nucleotide sequence ID" value="XM_709937.1"/>
</dbReference>
<dbReference type="SMR" id="Q59ZW2"/>
<dbReference type="FunCoup" id="Q59ZW2">
    <property type="interactions" value="144"/>
</dbReference>
<dbReference type="EnsemblFungi" id="C1_14210C_A-T">
    <property type="protein sequence ID" value="C1_14210C_A-T-p1"/>
    <property type="gene ID" value="C1_14210C_A"/>
</dbReference>
<dbReference type="GeneID" id="3643302"/>
<dbReference type="KEGG" id="cal:CAALFM_C114210CA"/>
<dbReference type="CGD" id="CAL0000188632">
    <property type="gene designation" value="IML2"/>
</dbReference>
<dbReference type="VEuPathDB" id="FungiDB:C1_14210C_A"/>
<dbReference type="eggNOG" id="KOG3783">
    <property type="taxonomic scope" value="Eukaryota"/>
</dbReference>
<dbReference type="HOGENOM" id="CLU_014926_0_0_1"/>
<dbReference type="InParanoid" id="Q59ZW2"/>
<dbReference type="OMA" id="WNGYNRM"/>
<dbReference type="OrthoDB" id="2154985at2759"/>
<dbReference type="Proteomes" id="UP000000559">
    <property type="component" value="Chromosome 1"/>
</dbReference>
<dbReference type="GO" id="GO:0005737">
    <property type="term" value="C:cytoplasm"/>
    <property type="evidence" value="ECO:0007669"/>
    <property type="project" value="UniProtKB-SubCell"/>
</dbReference>
<dbReference type="GO" id="GO:0005634">
    <property type="term" value="C:nucleus"/>
    <property type="evidence" value="ECO:0007669"/>
    <property type="project" value="UniProtKB-SubCell"/>
</dbReference>
<dbReference type="InterPro" id="IPR019412">
    <property type="entry name" value="Iml2/TPR_39"/>
</dbReference>
<dbReference type="PANTHER" id="PTHR31859">
    <property type="entry name" value="TETRATRICOPEPTIDE REPEAT PROTEIN 39 FAMILY MEMBER"/>
    <property type="match status" value="1"/>
</dbReference>
<dbReference type="PANTHER" id="PTHR31859:SF1">
    <property type="entry name" value="TETRATRICOPEPTIDE REPEAT PROTEIN 39C"/>
    <property type="match status" value="1"/>
</dbReference>
<dbReference type="Pfam" id="PF10300">
    <property type="entry name" value="Iml2-TPR_39"/>
    <property type="match status" value="1"/>
</dbReference>
<name>IML2_CANAL</name>
<proteinExistence type="inferred from homology"/>
<accession>Q59ZW2</accession>
<accession>A0A1D8PFV5</accession>
<reference key="1">
    <citation type="journal article" date="2004" name="Proc. Natl. Acad. Sci. U.S.A.">
        <title>The diploid genome sequence of Candida albicans.</title>
        <authorList>
            <person name="Jones T."/>
            <person name="Federspiel N.A."/>
            <person name="Chibana H."/>
            <person name="Dungan J."/>
            <person name="Kalman S."/>
            <person name="Magee B.B."/>
            <person name="Newport G."/>
            <person name="Thorstenson Y.R."/>
            <person name="Agabian N."/>
            <person name="Magee P.T."/>
            <person name="Davis R.W."/>
            <person name="Scherer S."/>
        </authorList>
    </citation>
    <scope>NUCLEOTIDE SEQUENCE [LARGE SCALE GENOMIC DNA]</scope>
    <source>
        <strain>SC5314 / ATCC MYA-2876</strain>
    </source>
</reference>
<reference key="2">
    <citation type="journal article" date="2007" name="Genome Biol.">
        <title>Assembly of the Candida albicans genome into sixteen supercontigs aligned on the eight chromosomes.</title>
        <authorList>
            <person name="van het Hoog M."/>
            <person name="Rast T.J."/>
            <person name="Martchenko M."/>
            <person name="Grindle S."/>
            <person name="Dignard D."/>
            <person name="Hogues H."/>
            <person name="Cuomo C."/>
            <person name="Berriman M."/>
            <person name="Scherer S."/>
            <person name="Magee B.B."/>
            <person name="Whiteway M."/>
            <person name="Chibana H."/>
            <person name="Nantel A."/>
            <person name="Magee P.T."/>
        </authorList>
    </citation>
    <scope>GENOME REANNOTATION</scope>
    <source>
        <strain>SC5314 / ATCC MYA-2876</strain>
    </source>
</reference>
<reference key="3">
    <citation type="journal article" date="2013" name="Genome Biol.">
        <title>Assembly of a phased diploid Candida albicans genome facilitates allele-specific measurements and provides a simple model for repeat and indel structure.</title>
        <authorList>
            <person name="Muzzey D."/>
            <person name="Schwartz K."/>
            <person name="Weissman J.S."/>
            <person name="Sherlock G."/>
        </authorList>
    </citation>
    <scope>NUCLEOTIDE SEQUENCE [LARGE SCALE GENOMIC DNA]</scope>
    <scope>GENOME REANNOTATION</scope>
    <source>
        <strain>SC5314 / ATCC MYA-2876</strain>
    </source>
</reference>
<feature type="chain" id="PRO_0000333344" description="Inclusion body clearance protein IML2">
    <location>
        <begin position="1"/>
        <end position="866"/>
    </location>
</feature>
<feature type="region of interest" description="Disordered" evidence="2">
    <location>
        <begin position="292"/>
        <end position="328"/>
    </location>
</feature>
<feature type="compositionally biased region" description="Acidic residues" evidence="2">
    <location>
        <begin position="317"/>
        <end position="328"/>
    </location>
</feature>
<organism>
    <name type="scientific">Candida albicans (strain SC5314 / ATCC MYA-2876)</name>
    <name type="common">Yeast</name>
    <dbReference type="NCBI Taxonomy" id="237561"/>
    <lineage>
        <taxon>Eukaryota</taxon>
        <taxon>Fungi</taxon>
        <taxon>Dikarya</taxon>
        <taxon>Ascomycota</taxon>
        <taxon>Saccharomycotina</taxon>
        <taxon>Pichiomycetes</taxon>
        <taxon>Debaryomycetaceae</taxon>
        <taxon>Candida/Lodderomyces clade</taxon>
        <taxon>Candida</taxon>
    </lineage>
</organism>
<comment type="function">
    <text evidence="1">Inclusion body (IB) resident protein that interacts strongly with lipid droplet (LD) proteins. Involved in LD-mediated IB clearing after protein folding stress, probably by enabling access to the IBs of an LD-stored soluble sterol derivative that acts as a chaperone in inclusion clearing.</text>
</comment>
<comment type="subunit">
    <text evidence="1">Interacts with lipid droplet proteins.</text>
</comment>
<comment type="subcellular location">
    <subcellularLocation>
        <location evidence="1">Cytoplasm</location>
    </subcellularLocation>
    <subcellularLocation>
        <location evidence="1">Nucleus</location>
    </subcellularLocation>
    <text evidence="1">Localized exclusively in cytoplasmic inclusion bodies under protein folding stress conditions.</text>
</comment>
<comment type="similarity">
    <text evidence="3">Belongs to the IML2 family.</text>
</comment>